<accession>P0C6G3</accession>
<keyword id="KW-1032">Host cell membrane</keyword>
<keyword id="KW-1043">Host membrane</keyword>
<keyword id="KW-0945">Host-virus interaction</keyword>
<keyword id="KW-1090">Inhibition of host innate immune response by virus</keyword>
<keyword id="KW-0449">Lipoprotein</keyword>
<keyword id="KW-0472">Membrane</keyword>
<keyword id="KW-0519">Myristate</keyword>
<keyword id="KW-1185">Reference proteome</keyword>
<keyword id="KW-0941">Suppressor of RNA silencing</keyword>
<keyword id="KW-0899">Viral immunoevasion</keyword>
<gene>
    <name type="ORF">AC4</name>
    <name type="ORF">AL4</name>
</gene>
<name>AC4_PYMVV</name>
<reference key="1">
    <citation type="journal article" date="1991" name="J. Gen. Virol.">
        <title>The nucleotide sequence of the infectious cloned DNA components of potato yellow mosaic virus.</title>
        <authorList>
            <person name="Coutts R.H.A."/>
            <person name="Coffin R.S."/>
            <person name="Roberts E.J.F."/>
            <person name="Hamilton W.D.O."/>
        </authorList>
    </citation>
    <scope>NUCLEOTIDE SEQUENCE [GENOMIC DNA]</scope>
</reference>
<organism>
    <name type="scientific">Potato yellow mosaic virus (isolate Venezuela)</name>
    <name type="common">PYMV</name>
    <dbReference type="NCBI Taxonomy" id="223310"/>
    <lineage>
        <taxon>Viruses</taxon>
        <taxon>Monodnaviria</taxon>
        <taxon>Shotokuvirae</taxon>
        <taxon>Cressdnaviricota</taxon>
        <taxon>Repensiviricetes</taxon>
        <taxon>Geplafuvirales</taxon>
        <taxon>Geminiviridae</taxon>
        <taxon>Begomovirus</taxon>
        <taxon>Potato yellow mosaic virus</taxon>
    </lineage>
</organism>
<evidence type="ECO:0000250" key="1"/>
<evidence type="ECO:0000256" key="2">
    <source>
        <dbReference type="SAM" id="MobiDB-lite"/>
    </source>
</evidence>
<evidence type="ECO:0000305" key="3"/>
<feature type="initiator methionine" description="Removed" evidence="1">
    <location>
        <position position="1"/>
    </location>
</feature>
<feature type="chain" id="PRO_0000323692" description="Protein AC4">
    <location>
        <begin position="2"/>
        <end position="85"/>
    </location>
</feature>
<feature type="region of interest" description="Disordered" evidence="2">
    <location>
        <begin position="44"/>
        <end position="63"/>
    </location>
</feature>
<feature type="compositionally biased region" description="Polar residues" evidence="2">
    <location>
        <begin position="46"/>
        <end position="62"/>
    </location>
</feature>
<feature type="lipid moiety-binding region" description="N-myristoyl glycine; by host" evidence="1">
    <location>
        <position position="2"/>
    </location>
</feature>
<organismHost>
    <name type="scientific">Solanum tuberosum</name>
    <name type="common">Potato</name>
    <dbReference type="NCBI Taxonomy" id="4113"/>
</organismHost>
<comment type="function">
    <text evidence="1">Pathogenicity determinant (By similarity). May act as a suppressor of RNA-mediated gene silencing, also known as post-transcriptional gene silencing (PTGS), a mechanism of plant viral defense that limits the accumulation of viral RNAs.</text>
</comment>
<comment type="subcellular location">
    <subcellularLocation>
        <location evidence="1">Host cell membrane</location>
        <topology evidence="1">Lipid-anchor</topology>
    </subcellularLocation>
    <text evidence="1">Localizes to the cell periphery.</text>
</comment>
<comment type="similarity">
    <text evidence="3">Belongs to the geminiviridae protein AC4/C4 family.</text>
</comment>
<dbReference type="EMBL" id="D00940">
    <property type="status" value="NOT_ANNOTATED_CDS"/>
    <property type="molecule type" value="Genomic_DNA"/>
</dbReference>
<dbReference type="Proteomes" id="UP000006828">
    <property type="component" value="Genome"/>
</dbReference>
<dbReference type="GO" id="GO:0020002">
    <property type="term" value="C:host cell plasma membrane"/>
    <property type="evidence" value="ECO:0007669"/>
    <property type="project" value="UniProtKB-SubCell"/>
</dbReference>
<dbReference type="GO" id="GO:0016020">
    <property type="term" value="C:membrane"/>
    <property type="evidence" value="ECO:0007669"/>
    <property type="project" value="UniProtKB-KW"/>
</dbReference>
<dbReference type="GO" id="GO:0052170">
    <property type="term" value="P:symbiont-mediated suppression of host innate immune response"/>
    <property type="evidence" value="ECO:0007669"/>
    <property type="project" value="UniProtKB-KW"/>
</dbReference>
<dbReference type="InterPro" id="IPR002488">
    <property type="entry name" value="Gemini_C4"/>
</dbReference>
<dbReference type="Pfam" id="PF01492">
    <property type="entry name" value="Gemini_C4"/>
    <property type="match status" value="1"/>
</dbReference>
<protein>
    <recommendedName>
        <fullName>Protein AC4</fullName>
    </recommendedName>
    <alternativeName>
        <fullName>Protein AL4</fullName>
    </alternativeName>
</protein>
<sequence length="85" mass="9416">MGNLISTFLSSSKGNSTAQITDCSIWCPRPGQHISIRTFRELNRAPMSNPTSRKTGTVSNGDCSRLTEEVLEADSRHQTTQLPRH</sequence>
<proteinExistence type="inferred from homology"/>